<protein>
    <recommendedName>
        <fullName>Putative NAD(P)H nitroreductase MhqN</fullName>
        <ecNumber>1.-.-.-</ecNumber>
    </recommendedName>
</protein>
<gene>
    <name type="primary">mhqN</name>
    <name type="synonym">ydfN</name>
    <name type="ordered locus">BSU05480</name>
</gene>
<name>MHQN_BACSU</name>
<comment type="function">
    <text evidence="5">Putative nitroreductase that may contribute to the degradation of aromatic compounds.</text>
</comment>
<comment type="cofactor">
    <cofactor evidence="1">
        <name>FMN</name>
        <dbReference type="ChEBI" id="CHEBI:58210"/>
    </cofactor>
</comment>
<comment type="subunit">
    <text evidence="1">Homodimer.</text>
</comment>
<comment type="subcellular location">
    <subcellularLocation>
        <location evidence="2 3">Cytoplasm</location>
    </subcellularLocation>
</comment>
<comment type="induction">
    <text evidence="2 3">Repressed by MhqR. Strongly induced by stress due to exposure to 2-methylhydroquinone (2-MHQ) and less strongly induced after diamide or catechol stress. Not induced by oxidative stress due to hydrogen peroxide or methylglyoxal.</text>
</comment>
<comment type="similarity">
    <text evidence="5">Belongs to the nitroreductase family.</text>
</comment>
<comment type="sequence caution" evidence="5">
    <conflict type="erroneous initiation">
        <sequence resource="EMBL-CDS" id="BAA19382"/>
    </conflict>
</comment>
<evidence type="ECO:0000250" key="1"/>
<evidence type="ECO:0000269" key="2">
    <source>
    </source>
</evidence>
<evidence type="ECO:0000269" key="3">
    <source>
    </source>
</evidence>
<evidence type="ECO:0000269" key="4">
    <source ref="5"/>
</evidence>
<evidence type="ECO:0000305" key="5"/>
<evidence type="ECO:0007829" key="6">
    <source>
        <dbReference type="PDB" id="3BEM"/>
    </source>
</evidence>
<organism>
    <name type="scientific">Bacillus subtilis (strain 168)</name>
    <dbReference type="NCBI Taxonomy" id="224308"/>
    <lineage>
        <taxon>Bacteria</taxon>
        <taxon>Bacillati</taxon>
        <taxon>Bacillota</taxon>
        <taxon>Bacilli</taxon>
        <taxon>Bacillales</taxon>
        <taxon>Bacillaceae</taxon>
        <taxon>Bacillus</taxon>
    </lineage>
</organism>
<accession>P96692</accession>
<keyword id="KW-0002">3D-structure</keyword>
<keyword id="KW-0058">Aromatic hydrocarbons catabolism</keyword>
<keyword id="KW-0963">Cytoplasm</keyword>
<keyword id="KW-0216">Detoxification</keyword>
<keyword id="KW-0285">Flavoprotein</keyword>
<keyword id="KW-0288">FMN</keyword>
<keyword id="KW-0520">NAD</keyword>
<keyword id="KW-0521">NADP</keyword>
<keyword id="KW-0560">Oxidoreductase</keyword>
<keyword id="KW-1185">Reference proteome</keyword>
<proteinExistence type="evidence at protein level"/>
<sequence length="206" mass="23559">MAEFTHLVNERRSASNFLSGHPITKEDLNEMFELVALAPSAFNLQHTKYVTVLDQDVKEKLKQAANGQYKVVSSSAVLLVLGDKQAYQQAADIYEGLKVLGILNKQEYDHMVQDTVSFYENRGEQFKRDEAIRNASLSAMMFMLSAKEKGWDTCPMIGFDAEAVKRILNIDDQFEVVMMITIGKEKTESRRPRGYRKPVNEFVEYM</sequence>
<dbReference type="EC" id="1.-.-.-"/>
<dbReference type="EMBL" id="AB001488">
    <property type="protein sequence ID" value="BAA19382.1"/>
    <property type="status" value="ALT_INIT"/>
    <property type="molecule type" value="Genomic_DNA"/>
</dbReference>
<dbReference type="EMBL" id="AL009126">
    <property type="protein sequence ID" value="CAB12355.1"/>
    <property type="molecule type" value="Genomic_DNA"/>
</dbReference>
<dbReference type="PIR" id="D69781">
    <property type="entry name" value="D69781"/>
</dbReference>
<dbReference type="RefSeq" id="NP_388429.1">
    <property type="nucleotide sequence ID" value="NC_000964.3"/>
</dbReference>
<dbReference type="RefSeq" id="WP_003244392.1">
    <property type="nucleotide sequence ID" value="NZ_OZ025638.1"/>
</dbReference>
<dbReference type="PDB" id="3BEM">
    <property type="method" value="X-ray"/>
    <property type="resolution" value="1.65 A"/>
    <property type="chains" value="A/B=1-206"/>
</dbReference>
<dbReference type="PDBsum" id="3BEM"/>
<dbReference type="SMR" id="P96692"/>
<dbReference type="FunCoup" id="P96692">
    <property type="interactions" value="141"/>
</dbReference>
<dbReference type="STRING" id="224308.BSU05480"/>
<dbReference type="PaxDb" id="224308-BSU05480"/>
<dbReference type="EnsemblBacteria" id="CAB12355">
    <property type="protein sequence ID" value="CAB12355"/>
    <property type="gene ID" value="BSU_05480"/>
</dbReference>
<dbReference type="GeneID" id="939899"/>
<dbReference type="KEGG" id="bsu:BSU05480"/>
<dbReference type="PATRIC" id="fig|224308.179.peg.588"/>
<dbReference type="eggNOG" id="COG0778">
    <property type="taxonomic scope" value="Bacteria"/>
</dbReference>
<dbReference type="InParanoid" id="P96692"/>
<dbReference type="OrthoDB" id="9782629at2"/>
<dbReference type="PhylomeDB" id="P96692"/>
<dbReference type="BioCyc" id="BSUB:BSU05480-MONOMER"/>
<dbReference type="EvolutionaryTrace" id="P96692"/>
<dbReference type="Proteomes" id="UP000001570">
    <property type="component" value="Chromosome"/>
</dbReference>
<dbReference type="GO" id="GO:0005737">
    <property type="term" value="C:cytoplasm"/>
    <property type="evidence" value="ECO:0007669"/>
    <property type="project" value="UniProtKB-SubCell"/>
</dbReference>
<dbReference type="GO" id="GO:0016491">
    <property type="term" value="F:oxidoreductase activity"/>
    <property type="evidence" value="ECO:0007669"/>
    <property type="project" value="UniProtKB-KW"/>
</dbReference>
<dbReference type="GO" id="GO:0009056">
    <property type="term" value="P:catabolic process"/>
    <property type="evidence" value="ECO:0007669"/>
    <property type="project" value="UniProtKB-KW"/>
</dbReference>
<dbReference type="GO" id="GO:0009636">
    <property type="term" value="P:response to toxic substance"/>
    <property type="evidence" value="ECO:0007669"/>
    <property type="project" value="UniProtKB-KW"/>
</dbReference>
<dbReference type="CDD" id="cd02137">
    <property type="entry name" value="MhqN-like"/>
    <property type="match status" value="1"/>
</dbReference>
<dbReference type="Gene3D" id="3.40.109.10">
    <property type="entry name" value="NADH Oxidase"/>
    <property type="match status" value="1"/>
</dbReference>
<dbReference type="InterPro" id="IPR029479">
    <property type="entry name" value="Nitroreductase"/>
</dbReference>
<dbReference type="InterPro" id="IPR000415">
    <property type="entry name" value="Nitroreductase-like"/>
</dbReference>
<dbReference type="PANTHER" id="PTHR43673">
    <property type="entry name" value="NAD(P)H NITROREDUCTASE YDGI-RELATED"/>
    <property type="match status" value="1"/>
</dbReference>
<dbReference type="PANTHER" id="PTHR43673:SF12">
    <property type="entry name" value="PROTEIN DRGA"/>
    <property type="match status" value="1"/>
</dbReference>
<dbReference type="Pfam" id="PF00881">
    <property type="entry name" value="Nitroreductase"/>
    <property type="match status" value="1"/>
</dbReference>
<dbReference type="SUPFAM" id="SSF55469">
    <property type="entry name" value="FMN-dependent nitroreductase-like"/>
    <property type="match status" value="1"/>
</dbReference>
<feature type="chain" id="PRO_0000072717" description="Putative NAD(P)H nitroreductase MhqN">
    <location>
        <begin position="1"/>
        <end position="206"/>
    </location>
</feature>
<feature type="binding site" evidence="4">
    <location>
        <begin position="11"/>
        <end position="13"/>
    </location>
    <ligand>
        <name>FMN</name>
        <dbReference type="ChEBI" id="CHEBI:58210"/>
    </ligand>
</feature>
<feature type="binding site" evidence="4">
    <location>
        <begin position="68"/>
        <end position="70"/>
    </location>
    <ligand>
        <name>FMN</name>
        <dbReference type="ChEBI" id="CHEBI:58210"/>
    </ligand>
</feature>
<feature type="binding site" evidence="4">
    <location>
        <begin position="157"/>
        <end position="158"/>
    </location>
    <ligand>
        <name>FMN</name>
        <dbReference type="ChEBI" id="CHEBI:58210"/>
    </ligand>
</feature>
<feature type="binding site" evidence="4">
    <location>
        <position position="193"/>
    </location>
    <ligand>
        <name>FMN</name>
        <dbReference type="ChEBI" id="CHEBI:58210"/>
    </ligand>
</feature>
<feature type="binding site" evidence="4">
    <location>
        <position position="196"/>
    </location>
    <ligand>
        <name>FMN</name>
        <dbReference type="ChEBI" id="CHEBI:58210"/>
    </ligand>
</feature>
<feature type="helix" evidence="6">
    <location>
        <begin position="1"/>
        <end position="10"/>
    </location>
</feature>
<feature type="helix" evidence="6">
    <location>
        <begin position="25"/>
        <end position="35"/>
    </location>
</feature>
<feature type="helix" evidence="6">
    <location>
        <begin position="41"/>
        <end position="43"/>
    </location>
</feature>
<feature type="strand" evidence="6">
    <location>
        <begin position="47"/>
        <end position="52"/>
    </location>
</feature>
<feature type="helix" evidence="6">
    <location>
        <begin position="55"/>
        <end position="63"/>
    </location>
</feature>
<feature type="turn" evidence="6">
    <location>
        <begin position="64"/>
        <end position="67"/>
    </location>
</feature>
<feature type="helix" evidence="6">
    <location>
        <begin position="70"/>
        <end position="73"/>
    </location>
</feature>
<feature type="strand" evidence="6">
    <location>
        <begin position="74"/>
        <end position="83"/>
    </location>
</feature>
<feature type="helix" evidence="6">
    <location>
        <begin position="86"/>
        <end position="89"/>
    </location>
</feature>
<feature type="helix" evidence="6">
    <location>
        <begin position="90"/>
        <end position="99"/>
    </location>
</feature>
<feature type="helix" evidence="6">
    <location>
        <begin position="105"/>
        <end position="122"/>
    </location>
</feature>
<feature type="helix" evidence="6">
    <location>
        <begin position="124"/>
        <end position="148"/>
    </location>
</feature>
<feature type="strand" evidence="6">
    <location>
        <begin position="152"/>
        <end position="156"/>
    </location>
</feature>
<feature type="helix" evidence="6">
    <location>
        <begin position="161"/>
        <end position="168"/>
    </location>
</feature>
<feature type="strand" evidence="6">
    <location>
        <begin position="174"/>
        <end position="183"/>
    </location>
</feature>
<feature type="helix" evidence="6">
    <location>
        <begin position="187"/>
        <end position="189"/>
    </location>
</feature>
<feature type="helix" evidence="6">
    <location>
        <begin position="199"/>
        <end position="201"/>
    </location>
</feature>
<feature type="strand" evidence="6">
    <location>
        <begin position="203"/>
        <end position="206"/>
    </location>
</feature>
<reference key="1">
    <citation type="submission" date="1997-03" db="EMBL/GenBank/DDBJ databases">
        <title>A 148 kbp sequence of the region between 35 and 47 degree of the Bacillus subtilis genome.</title>
        <authorList>
            <person name="Kasahara Y."/>
            <person name="Nakai S."/>
            <person name="Lee S."/>
            <person name="Sadaie Y."/>
            <person name="Ogasawara N."/>
        </authorList>
    </citation>
    <scope>NUCLEOTIDE SEQUENCE [GENOMIC DNA]</scope>
    <source>
        <strain>168</strain>
    </source>
</reference>
<reference key="2">
    <citation type="journal article" date="1997" name="Nature">
        <title>The complete genome sequence of the Gram-positive bacterium Bacillus subtilis.</title>
        <authorList>
            <person name="Kunst F."/>
            <person name="Ogasawara N."/>
            <person name="Moszer I."/>
            <person name="Albertini A.M."/>
            <person name="Alloni G."/>
            <person name="Azevedo V."/>
            <person name="Bertero M.G."/>
            <person name="Bessieres P."/>
            <person name="Bolotin A."/>
            <person name="Borchert S."/>
            <person name="Borriss R."/>
            <person name="Boursier L."/>
            <person name="Brans A."/>
            <person name="Braun M."/>
            <person name="Brignell S.C."/>
            <person name="Bron S."/>
            <person name="Brouillet S."/>
            <person name="Bruschi C.V."/>
            <person name="Caldwell B."/>
            <person name="Capuano V."/>
            <person name="Carter N.M."/>
            <person name="Choi S.-K."/>
            <person name="Codani J.-J."/>
            <person name="Connerton I.F."/>
            <person name="Cummings N.J."/>
            <person name="Daniel R.A."/>
            <person name="Denizot F."/>
            <person name="Devine K.M."/>
            <person name="Duesterhoeft A."/>
            <person name="Ehrlich S.D."/>
            <person name="Emmerson P.T."/>
            <person name="Entian K.-D."/>
            <person name="Errington J."/>
            <person name="Fabret C."/>
            <person name="Ferrari E."/>
            <person name="Foulger D."/>
            <person name="Fritz C."/>
            <person name="Fujita M."/>
            <person name="Fujita Y."/>
            <person name="Fuma S."/>
            <person name="Galizzi A."/>
            <person name="Galleron N."/>
            <person name="Ghim S.-Y."/>
            <person name="Glaser P."/>
            <person name="Goffeau A."/>
            <person name="Golightly E.J."/>
            <person name="Grandi G."/>
            <person name="Guiseppi G."/>
            <person name="Guy B.J."/>
            <person name="Haga K."/>
            <person name="Haiech J."/>
            <person name="Harwood C.R."/>
            <person name="Henaut A."/>
            <person name="Hilbert H."/>
            <person name="Holsappel S."/>
            <person name="Hosono S."/>
            <person name="Hullo M.-F."/>
            <person name="Itaya M."/>
            <person name="Jones L.-M."/>
            <person name="Joris B."/>
            <person name="Karamata D."/>
            <person name="Kasahara Y."/>
            <person name="Klaerr-Blanchard M."/>
            <person name="Klein C."/>
            <person name="Kobayashi Y."/>
            <person name="Koetter P."/>
            <person name="Koningstein G."/>
            <person name="Krogh S."/>
            <person name="Kumano M."/>
            <person name="Kurita K."/>
            <person name="Lapidus A."/>
            <person name="Lardinois S."/>
            <person name="Lauber J."/>
            <person name="Lazarevic V."/>
            <person name="Lee S.-M."/>
            <person name="Levine A."/>
            <person name="Liu H."/>
            <person name="Masuda S."/>
            <person name="Mauel C."/>
            <person name="Medigue C."/>
            <person name="Medina N."/>
            <person name="Mellado R.P."/>
            <person name="Mizuno M."/>
            <person name="Moestl D."/>
            <person name="Nakai S."/>
            <person name="Noback M."/>
            <person name="Noone D."/>
            <person name="O'Reilly M."/>
            <person name="Ogawa K."/>
            <person name="Ogiwara A."/>
            <person name="Oudega B."/>
            <person name="Park S.-H."/>
            <person name="Parro V."/>
            <person name="Pohl T.M."/>
            <person name="Portetelle D."/>
            <person name="Porwollik S."/>
            <person name="Prescott A.M."/>
            <person name="Presecan E."/>
            <person name="Pujic P."/>
            <person name="Purnelle B."/>
            <person name="Rapoport G."/>
            <person name="Rey M."/>
            <person name="Reynolds S."/>
            <person name="Rieger M."/>
            <person name="Rivolta C."/>
            <person name="Rocha E."/>
            <person name="Roche B."/>
            <person name="Rose M."/>
            <person name="Sadaie Y."/>
            <person name="Sato T."/>
            <person name="Scanlan E."/>
            <person name="Schleich S."/>
            <person name="Schroeter R."/>
            <person name="Scoffone F."/>
            <person name="Sekiguchi J."/>
            <person name="Sekowska A."/>
            <person name="Seror S.J."/>
            <person name="Serror P."/>
            <person name="Shin B.-S."/>
            <person name="Soldo B."/>
            <person name="Sorokin A."/>
            <person name="Tacconi E."/>
            <person name="Takagi T."/>
            <person name="Takahashi H."/>
            <person name="Takemaru K."/>
            <person name="Takeuchi M."/>
            <person name="Tamakoshi A."/>
            <person name="Tanaka T."/>
            <person name="Terpstra P."/>
            <person name="Tognoni A."/>
            <person name="Tosato V."/>
            <person name="Uchiyama S."/>
            <person name="Vandenbol M."/>
            <person name="Vannier F."/>
            <person name="Vassarotti A."/>
            <person name="Viari A."/>
            <person name="Wambutt R."/>
            <person name="Wedler E."/>
            <person name="Wedler H."/>
            <person name="Weitzenegger T."/>
            <person name="Winters P."/>
            <person name="Wipat A."/>
            <person name="Yamamoto H."/>
            <person name="Yamane K."/>
            <person name="Yasumoto K."/>
            <person name="Yata K."/>
            <person name="Yoshida K."/>
            <person name="Yoshikawa H.-F."/>
            <person name="Zumstein E."/>
            <person name="Yoshikawa H."/>
            <person name="Danchin A."/>
        </authorList>
    </citation>
    <scope>NUCLEOTIDE SEQUENCE [LARGE SCALE GENOMIC DNA]</scope>
    <source>
        <strain>168</strain>
    </source>
</reference>
<reference key="3">
    <citation type="journal article" date="2007" name="Mol. Microbiol.">
        <title>The MarR-type repressor MhqR (YkvE) regulates multiple dioxygenases/glyoxalases and an azoreductase which confer resistance to 2-methylhydroquinone and catechol in Bacillus subtilis.</title>
        <authorList>
            <person name="Toewe S."/>
            <person name="Leelakriangsak M."/>
            <person name="Kobayashi K."/>
            <person name="Van Duy N."/>
            <person name="Hecker M."/>
            <person name="Zuber P."/>
            <person name="Antelmann H."/>
        </authorList>
    </citation>
    <scope>INDUCTION</scope>
    <scope>SUBCELLULAR LOCATION</scope>
    <source>
        <strain>168</strain>
    </source>
</reference>
<reference key="4">
    <citation type="journal article" date="2007" name="Proteomics">
        <title>Transcriptome and proteome analyses in response to 2-methylhydroquinone and 6-brom-2-vinyl-chroman-4-on reveal different degradation systems involved in the catabolism of aromatic compounds in Bacillus subtilis.</title>
        <authorList>
            <person name="Nguyen V.D."/>
            <person name="Wolf C."/>
            <person name="Maeder U."/>
            <person name="Lalk M."/>
            <person name="Langer P."/>
            <person name="Lindequist U."/>
            <person name="Hecker M."/>
            <person name="Antelmann H."/>
        </authorList>
    </citation>
    <scope>INDUCTION</scope>
    <scope>IDENTIFICATION OF THE YDFNOP OPERON</scope>
    <scope>SUBCELLULAR LOCATION</scope>
    <scope>NOMENCLATURE</scope>
</reference>
<reference key="5">
    <citation type="submission" date="2007-12" db="PDB data bank">
        <title>Crystal structure of putative nitroreductase ydfN (2632848) from Bacillus subtilis at 1.65 A resolution.</title>
        <authorList>
            <consortium name="Joint center for structural genomics (JCSG)"/>
        </authorList>
    </citation>
    <scope>X-RAY CRYSTALLOGRAPHY (1.65 ANGSTROMS) IN COMPLEX WITH FMN</scope>
    <scope>SUBUNIT</scope>
</reference>